<evidence type="ECO:0000255" key="1"/>
<evidence type="ECO:0000255" key="2">
    <source>
        <dbReference type="PROSITE-ProRule" id="PRU00521"/>
    </source>
</evidence>
<evidence type="ECO:0000269" key="3">
    <source>
    </source>
</evidence>
<evidence type="ECO:0000269" key="4">
    <source>
    </source>
</evidence>
<evidence type="ECO:0000305" key="5"/>
<feature type="chain" id="PRO_0000150512" description="Olfactory receptor 2W3">
    <location>
        <begin position="1"/>
        <end position="314"/>
    </location>
</feature>
<feature type="topological domain" description="Extracellular" evidence="1">
    <location>
        <begin position="1"/>
        <end position="25"/>
    </location>
</feature>
<feature type="transmembrane region" description="Helical; Name=1" evidence="1">
    <location>
        <begin position="26"/>
        <end position="49"/>
    </location>
</feature>
<feature type="topological domain" description="Cytoplasmic" evidence="1">
    <location>
        <begin position="50"/>
        <end position="57"/>
    </location>
</feature>
<feature type="transmembrane region" description="Helical; Name=2" evidence="1">
    <location>
        <begin position="58"/>
        <end position="79"/>
    </location>
</feature>
<feature type="topological domain" description="Extracellular" evidence="1">
    <location>
        <begin position="80"/>
        <end position="100"/>
    </location>
</feature>
<feature type="transmembrane region" description="Helical; Name=3" evidence="1">
    <location>
        <begin position="101"/>
        <end position="120"/>
    </location>
</feature>
<feature type="topological domain" description="Cytoplasmic" evidence="1">
    <location>
        <begin position="121"/>
        <end position="139"/>
    </location>
</feature>
<feature type="transmembrane region" description="Helical; Name=4" evidence="1">
    <location>
        <begin position="140"/>
        <end position="158"/>
    </location>
</feature>
<feature type="topological domain" description="Extracellular" evidence="1">
    <location>
        <begin position="159"/>
        <end position="195"/>
    </location>
</feature>
<feature type="transmembrane region" description="Helical; Name=5" evidence="1">
    <location>
        <begin position="196"/>
        <end position="219"/>
    </location>
</feature>
<feature type="topological domain" description="Cytoplasmic" evidence="1">
    <location>
        <begin position="220"/>
        <end position="236"/>
    </location>
</feature>
<feature type="transmembrane region" description="Helical; Name=6" evidence="1">
    <location>
        <begin position="237"/>
        <end position="259"/>
    </location>
</feature>
<feature type="topological domain" description="Extracellular" evidence="1">
    <location>
        <begin position="260"/>
        <end position="272"/>
    </location>
</feature>
<feature type="transmembrane region" description="Helical; Name=7" evidence="1">
    <location>
        <begin position="273"/>
        <end position="292"/>
    </location>
</feature>
<feature type="topological domain" description="Cytoplasmic" evidence="1">
    <location>
        <begin position="293"/>
        <end position="314"/>
    </location>
</feature>
<feature type="glycosylation site" description="N-linked (GlcNAc...) asparagine" evidence="1">
    <location>
        <position position="5"/>
    </location>
</feature>
<feature type="sequence variant" id="VAR_074043" description="Found in a family with retinitis pigmentosa; dbSNP:rs189993261." evidence="4">
    <original>R</original>
    <variation>W</variation>
    <location>
        <position position="142"/>
    </location>
</feature>
<feature type="sequence variant" id="VAR_034180" description="In dbSNP:rs12083024.">
    <original>C</original>
    <variation>S</variation>
    <location>
        <position position="169"/>
    </location>
</feature>
<feature type="sequence variant" id="VAR_034181" description="In dbSNP:rs10888267.">
    <original>R</original>
    <variation>C</variation>
    <location>
        <position position="179"/>
    </location>
</feature>
<feature type="sequence variant" id="VAR_034182" description="In dbSNP:rs12135078.">
    <original>V</original>
    <variation>I</variation>
    <location>
        <position position="190"/>
    </location>
</feature>
<feature type="sequence variant" id="VAR_034183" description="In dbSNP:rs12139390." evidence="3">
    <original>E</original>
    <variation>D</variation>
    <location>
        <position position="196"/>
    </location>
</feature>
<feature type="sequence variant" id="VAR_034184" description="In dbSNP:rs11204545." evidence="3">
    <original>M</original>
    <variation>K</variation>
    <location>
        <position position="272"/>
    </location>
</feature>
<feature type="sequence variant" id="VAR_034185" description="In dbSNP:rs11204546." evidence="3">
    <original>M</original>
    <variation>T</variation>
    <location>
        <position position="275"/>
    </location>
</feature>
<sequence>MDGTNGSTQTHFILLGFSDRPHLERILFVVILIAYLLTLVGNTTIILVSRLDPHLHTPMYFFLAHLSFLDLSFTTSSIPQLLYNLNGCDKTISYMGCAIQLFLFLGLGGVECLLLAVMAYDRCVAICKPLHYMVIMNPRLCRGLVSVTWGCGVANSLAMSPVTLRLPRCGHHEVDHFLREMPALIRMACVSTVAIEGTVFVLAVGVVLSPLVFILLSYSYIVRAVLQIRSASGRQKAFGTCGSHLTVVSLFYGNIIYMYMQPGASSSQDQGMFLMLFYNIVTPLLNPLIYTLRNREVKGALGRLLLGKRELGKE</sequence>
<proteinExistence type="evidence at transcript level"/>
<protein>
    <recommendedName>
        <fullName>Olfactory receptor 2W3</fullName>
    </recommendedName>
    <alternativeName>
        <fullName>Olfactory receptor 2W8</fullName>
    </alternativeName>
    <alternativeName>
        <fullName>Olfactory receptor OR1-49</fullName>
    </alternativeName>
</protein>
<gene>
    <name type="primary">OR2W3</name>
    <name type="synonym">OR2W3P</name>
    <name type="synonym">OR2W8P</name>
</gene>
<organism>
    <name type="scientific">Homo sapiens</name>
    <name type="common">Human</name>
    <dbReference type="NCBI Taxonomy" id="9606"/>
    <lineage>
        <taxon>Eukaryota</taxon>
        <taxon>Metazoa</taxon>
        <taxon>Chordata</taxon>
        <taxon>Craniata</taxon>
        <taxon>Vertebrata</taxon>
        <taxon>Euteleostomi</taxon>
        <taxon>Mammalia</taxon>
        <taxon>Eutheria</taxon>
        <taxon>Euarchontoglires</taxon>
        <taxon>Primates</taxon>
        <taxon>Haplorrhini</taxon>
        <taxon>Catarrhini</taxon>
        <taxon>Hominidae</taxon>
        <taxon>Homo</taxon>
    </lineage>
</organism>
<dbReference type="EMBL" id="AB065949">
    <property type="protein sequence ID" value="BAC06162.1"/>
    <property type="molecule type" value="Genomic_DNA"/>
</dbReference>
<dbReference type="EMBL" id="BX537432">
    <property type="protein sequence ID" value="CAD97674.1"/>
    <property type="molecule type" value="mRNA"/>
</dbReference>
<dbReference type="EMBL" id="BK004456">
    <property type="protein sequence ID" value="DAA04854.1"/>
    <property type="status" value="ALT_SEQ"/>
    <property type="molecule type" value="Genomic_DNA"/>
</dbReference>
<dbReference type="CCDS" id="CCDS31099.1"/>
<dbReference type="RefSeq" id="NP_001001957.2">
    <property type="nucleotide sequence ID" value="NM_001001957.2"/>
</dbReference>
<dbReference type="SMR" id="Q7Z3T1"/>
<dbReference type="BioGRID" id="131235">
    <property type="interactions" value="4"/>
</dbReference>
<dbReference type="FunCoup" id="Q7Z3T1">
    <property type="interactions" value="451"/>
</dbReference>
<dbReference type="IntAct" id="Q7Z3T1">
    <property type="interactions" value="1"/>
</dbReference>
<dbReference type="STRING" id="9606.ENSP00000353516"/>
<dbReference type="GlyCosmos" id="Q7Z3T1">
    <property type="glycosylation" value="1 site, No reported glycans"/>
</dbReference>
<dbReference type="GlyGen" id="Q7Z3T1">
    <property type="glycosylation" value="1 site"/>
</dbReference>
<dbReference type="BioMuta" id="OR2W3"/>
<dbReference type="DMDM" id="83305196"/>
<dbReference type="MassIVE" id="Q7Z3T1"/>
<dbReference type="PaxDb" id="9606-ENSP00000353516"/>
<dbReference type="PeptideAtlas" id="Q7Z3T1"/>
<dbReference type="Antibodypedia" id="52554">
    <property type="antibodies" value="107 antibodies from 24 providers"/>
</dbReference>
<dbReference type="DNASU" id="343171"/>
<dbReference type="Ensembl" id="ENST00000360358.3">
    <property type="protein sequence ID" value="ENSP00000353516.3"/>
    <property type="gene ID" value="ENSG00000238243.3"/>
</dbReference>
<dbReference type="GeneID" id="343171"/>
<dbReference type="KEGG" id="hsa:343171"/>
<dbReference type="MANE-Select" id="ENST00000360358.3">
    <property type="protein sequence ID" value="ENSP00000353516.3"/>
    <property type="RefSeq nucleotide sequence ID" value="NM_001001957.2"/>
    <property type="RefSeq protein sequence ID" value="NP_001001957.2"/>
</dbReference>
<dbReference type="UCSC" id="uc010pzb.2">
    <property type="organism name" value="human"/>
</dbReference>
<dbReference type="AGR" id="HGNC:15021"/>
<dbReference type="CTD" id="343171"/>
<dbReference type="DisGeNET" id="343171"/>
<dbReference type="GeneCards" id="OR2W3"/>
<dbReference type="HGNC" id="HGNC:15021">
    <property type="gene designation" value="OR2W3"/>
</dbReference>
<dbReference type="HPA" id="ENSG00000238243">
    <property type="expression patterns" value="Group enriched (bone marrow, thyroid gland)"/>
</dbReference>
<dbReference type="neXtProt" id="NX_Q7Z3T1"/>
<dbReference type="OpenTargets" id="ENSG00000238243"/>
<dbReference type="PharmGKB" id="PA32216"/>
<dbReference type="VEuPathDB" id="HostDB:ENSG00000238243"/>
<dbReference type="eggNOG" id="ENOG502TD9W">
    <property type="taxonomic scope" value="Eukaryota"/>
</dbReference>
<dbReference type="GeneTree" id="ENSGT01130000278266"/>
<dbReference type="HOGENOM" id="CLU_012526_1_0_1"/>
<dbReference type="InParanoid" id="Q7Z3T1"/>
<dbReference type="OMA" id="CGHRSVD"/>
<dbReference type="OrthoDB" id="9882471at2759"/>
<dbReference type="PAN-GO" id="Q7Z3T1">
    <property type="GO annotations" value="0 GO annotations based on evolutionary models"/>
</dbReference>
<dbReference type="PhylomeDB" id="Q7Z3T1"/>
<dbReference type="TreeFam" id="TF336512"/>
<dbReference type="PathwayCommons" id="Q7Z3T1"/>
<dbReference type="Reactome" id="R-HSA-381753">
    <property type="pathway name" value="Olfactory Signaling Pathway"/>
</dbReference>
<dbReference type="Reactome" id="R-HSA-9752946">
    <property type="pathway name" value="Expression and translocation of olfactory receptors"/>
</dbReference>
<dbReference type="BioGRID-ORCS" id="343171">
    <property type="hits" value="8 hits in 750 CRISPR screens"/>
</dbReference>
<dbReference type="GeneWiki" id="OR2W3"/>
<dbReference type="GenomeRNAi" id="343171"/>
<dbReference type="Pharos" id="Q7Z3T1">
    <property type="development level" value="Tbio"/>
</dbReference>
<dbReference type="PRO" id="PR:Q7Z3T1"/>
<dbReference type="Proteomes" id="UP000005640">
    <property type="component" value="Chromosome 1"/>
</dbReference>
<dbReference type="RNAct" id="Q7Z3T1">
    <property type="molecule type" value="protein"/>
</dbReference>
<dbReference type="Bgee" id="ENSG00000238243">
    <property type="expression patterns" value="Expressed in primordial germ cell in gonad and 106 other cell types or tissues"/>
</dbReference>
<dbReference type="GO" id="GO:0005886">
    <property type="term" value="C:plasma membrane"/>
    <property type="evidence" value="ECO:0000318"/>
    <property type="project" value="GO_Central"/>
</dbReference>
<dbReference type="GO" id="GO:0004930">
    <property type="term" value="F:G protein-coupled receptor activity"/>
    <property type="evidence" value="ECO:0007669"/>
    <property type="project" value="UniProtKB-KW"/>
</dbReference>
<dbReference type="GO" id="GO:0004984">
    <property type="term" value="F:olfactory receptor activity"/>
    <property type="evidence" value="ECO:0000318"/>
    <property type="project" value="GO_Central"/>
</dbReference>
<dbReference type="GO" id="GO:0050911">
    <property type="term" value="P:detection of chemical stimulus involved in sensory perception of smell"/>
    <property type="evidence" value="ECO:0000318"/>
    <property type="project" value="GO_Central"/>
</dbReference>
<dbReference type="CDD" id="cd15434">
    <property type="entry name" value="7tmA_OR2W-like"/>
    <property type="match status" value="1"/>
</dbReference>
<dbReference type="FunFam" id="1.10.1220.70:FF:000001">
    <property type="entry name" value="Olfactory receptor"/>
    <property type="match status" value="1"/>
</dbReference>
<dbReference type="FunFam" id="1.20.1070.10:FF:000005">
    <property type="entry name" value="Olfactory receptor"/>
    <property type="match status" value="1"/>
</dbReference>
<dbReference type="Gene3D" id="1.20.1070.10">
    <property type="entry name" value="Rhodopsin 7-helix transmembrane proteins"/>
    <property type="match status" value="1"/>
</dbReference>
<dbReference type="InterPro" id="IPR000276">
    <property type="entry name" value="GPCR_Rhodpsn"/>
</dbReference>
<dbReference type="InterPro" id="IPR017452">
    <property type="entry name" value="GPCR_Rhodpsn_7TM"/>
</dbReference>
<dbReference type="InterPro" id="IPR000725">
    <property type="entry name" value="Olfact_rcpt"/>
</dbReference>
<dbReference type="PANTHER" id="PTHR26453">
    <property type="entry name" value="OLFACTORY RECEPTOR"/>
    <property type="match status" value="1"/>
</dbReference>
<dbReference type="Pfam" id="PF13853">
    <property type="entry name" value="7tm_4"/>
    <property type="match status" value="1"/>
</dbReference>
<dbReference type="PRINTS" id="PR00237">
    <property type="entry name" value="GPCRRHODOPSN"/>
</dbReference>
<dbReference type="PRINTS" id="PR00245">
    <property type="entry name" value="OLFACTORYR"/>
</dbReference>
<dbReference type="SUPFAM" id="SSF81321">
    <property type="entry name" value="Family A G protein-coupled receptor-like"/>
    <property type="match status" value="1"/>
</dbReference>
<dbReference type="PROSITE" id="PS00237">
    <property type="entry name" value="G_PROTEIN_RECEP_F1_1"/>
    <property type="match status" value="1"/>
</dbReference>
<dbReference type="PROSITE" id="PS50262">
    <property type="entry name" value="G_PROTEIN_RECEP_F1_2"/>
    <property type="match status" value="1"/>
</dbReference>
<comment type="function">
    <text evidence="5">Odorant receptor.</text>
</comment>
<comment type="subcellular location">
    <subcellularLocation>
        <location>Cell membrane</location>
        <topology>Multi-pass membrane protein</topology>
    </subcellularLocation>
</comment>
<comment type="similarity">
    <text evidence="2">Belongs to the G-protein coupled receptor 1 family.</text>
</comment>
<comment type="online information" name="Human Olfactory Receptor Data Exploratorium (HORDE)">
    <link uri="http://genome.weizmann.ac.il/horde/card/index/symbol:OR2W3"/>
</comment>
<name>OR2W3_HUMAN</name>
<accession>Q7Z3T1</accession>
<accession>Q6IF06</accession>
<accession>Q8NG86</accession>
<reference key="1">
    <citation type="submission" date="2001-07" db="EMBL/GenBank/DDBJ databases">
        <title>Genome-wide discovery and analysis of human seven transmembrane helix receptor genes.</title>
        <authorList>
            <person name="Suwa M."/>
            <person name="Sato T."/>
            <person name="Okouchi I."/>
            <person name="Arita M."/>
            <person name="Futami K."/>
            <person name="Matsumoto S."/>
            <person name="Tsutsumi S."/>
            <person name="Aburatani H."/>
            <person name="Asai K."/>
            <person name="Akiyama Y."/>
        </authorList>
    </citation>
    <scope>NUCLEOTIDE SEQUENCE [GENOMIC DNA]</scope>
</reference>
<reference key="2">
    <citation type="journal article" date="2007" name="BMC Genomics">
        <title>The full-ORF clone resource of the German cDNA consortium.</title>
        <authorList>
            <person name="Bechtel S."/>
            <person name="Rosenfelder H."/>
            <person name="Duda A."/>
            <person name="Schmidt C.P."/>
            <person name="Ernst U."/>
            <person name="Wellenreuther R."/>
            <person name="Mehrle A."/>
            <person name="Schuster C."/>
            <person name="Bahr A."/>
            <person name="Bloecker H."/>
            <person name="Heubner D."/>
            <person name="Hoerlein A."/>
            <person name="Michel G."/>
            <person name="Wedler H."/>
            <person name="Koehrer K."/>
            <person name="Ottenwaelder B."/>
            <person name="Poustka A."/>
            <person name="Wiemann S."/>
            <person name="Schupp I."/>
        </authorList>
    </citation>
    <scope>NUCLEOTIDE SEQUENCE [LARGE SCALE MRNA]</scope>
    <scope>VARIANTS ASP-196; LYS-272 AND THR-275</scope>
    <source>
        <tissue>Fetal brain</tissue>
    </source>
</reference>
<reference key="3">
    <citation type="journal article" date="2004" name="Proc. Natl. Acad. Sci. U.S.A.">
        <title>The human olfactory receptor gene family.</title>
        <authorList>
            <person name="Malnic B."/>
            <person name="Godfrey P.A."/>
            <person name="Buck L.B."/>
        </authorList>
    </citation>
    <scope>IDENTIFICATION</scope>
</reference>
<reference key="4">
    <citation type="journal article" date="2004" name="Proc. Natl. Acad. Sci. U.S.A.">
        <authorList>
            <person name="Malnic B."/>
            <person name="Godfrey P.A."/>
            <person name="Buck L.B."/>
        </authorList>
    </citation>
    <scope>ERRATUM OF PUBMED:14983052</scope>
</reference>
<reference key="5">
    <citation type="journal article" date="2015" name="J. Neurol.">
        <title>Accumulation of rare variants in the arylsulfatase G (ARSG) gene in task-specific dystonia.</title>
        <authorList>
            <person name="Nibbeling E."/>
            <person name="Schaake S."/>
            <person name="Tijssen M.A."/>
            <person name="Weissbach A."/>
            <person name="Groen J.L."/>
            <person name="Altenmueller E."/>
            <person name="Verbeek D.S."/>
            <person name="Lohmann K."/>
        </authorList>
    </citation>
    <scope>VARIANT TRP-142</scope>
</reference>
<keyword id="KW-1003">Cell membrane</keyword>
<keyword id="KW-0297">G-protein coupled receptor</keyword>
<keyword id="KW-0325">Glycoprotein</keyword>
<keyword id="KW-0472">Membrane</keyword>
<keyword id="KW-0552">Olfaction</keyword>
<keyword id="KW-0675">Receptor</keyword>
<keyword id="KW-1185">Reference proteome</keyword>
<keyword id="KW-0716">Sensory transduction</keyword>
<keyword id="KW-0807">Transducer</keyword>
<keyword id="KW-0812">Transmembrane</keyword>
<keyword id="KW-1133">Transmembrane helix</keyword>